<name>VE41_NPVOP</name>
<feature type="chain" id="PRO_0000132862" description="Putative early 40.3 kDa protein">
    <location>
        <begin position="1"/>
        <end position="355"/>
    </location>
</feature>
<comment type="function">
    <text evidence="1">This protein is required for viral late gene expression.</text>
</comment>
<dbReference type="EMBL" id="U75930">
    <property type="protein sequence ID" value="AAC59016.1"/>
    <property type="molecule type" value="Genomic_DNA"/>
</dbReference>
<dbReference type="RefSeq" id="NP_046173.1">
    <property type="nucleotide sequence ID" value="NC_001875.2"/>
</dbReference>
<dbReference type="KEGG" id="vg:912097"/>
<dbReference type="OrthoDB" id="4723at10239"/>
<dbReference type="Proteomes" id="UP000009248">
    <property type="component" value="Genome"/>
</dbReference>
<dbReference type="InterPro" id="IPR010785">
    <property type="entry name" value="AcMNPV_AC18"/>
</dbReference>
<dbReference type="Pfam" id="PF07134">
    <property type="entry name" value="AcMNPV_Orf18"/>
    <property type="match status" value="1"/>
</dbReference>
<organism>
    <name type="scientific">Orgyia pseudotsugata multicapsid polyhedrosis virus</name>
    <name type="common">OpMNPV</name>
    <dbReference type="NCBI Taxonomy" id="262177"/>
    <lineage>
        <taxon>Viruses</taxon>
        <taxon>Viruses incertae sedis</taxon>
        <taxon>Naldaviricetes</taxon>
        <taxon>Lefavirales</taxon>
        <taxon>Baculoviridae</taxon>
        <taxon>Alphabaculovirus</taxon>
        <taxon>Alphabaculovirus orpseudotsugatae</taxon>
    </lineage>
</organism>
<evidence type="ECO:0000250" key="1"/>
<sequence length="355" mass="40337">MDRVASQIYSGALPYITTMDMEDRLRNRIAAKAGAKFFKACFEAVVADKSGLFVLSGGAATACHIGDDRNVLKCLDFDYYNATQEWLQLARLQQRLQACVQDNLEILSRLAQSVRMQDDLFVVKCFQNGAFCFNGPVQARLVPCVETVRTSFNGEFDLLRFALQVELKALNGVDEYVDQKVIVDRGAAVFNVFFVNIRAMKGPLTMERCVRTLAVFGDAYRVVVSPLQSVINDQIMCLLKDIFTDKPEFRVARPKALICALFAKLPREAYDECINSHHGAEPTRRRDETVTSFCRRTLHIHGPALGCRKLVYAYFKTDSFARQMPDYVANRAIYPHTDCEMKWKEFIHFFVVAKV</sequence>
<reference key="1">
    <citation type="journal article" date="1997" name="Virology">
        <title>The sequence of the Orgyia pseudotsugata multinucleocapsid nuclear polyhedrosis virus genome.</title>
        <authorList>
            <person name="Ahrens C.H."/>
            <person name="Russell R.R."/>
            <person name="Funk C.J."/>
            <person name="Evans J."/>
            <person name="Harwood S."/>
            <person name="Rohrmann G.F."/>
        </authorList>
    </citation>
    <scope>NUCLEOTIDE SEQUENCE [LARGE SCALE GENOMIC DNA]</scope>
</reference>
<organismHost>
    <name type="scientific">Orgyia pseudotsugata</name>
    <name type="common">Douglas-fir tussock moth</name>
    <dbReference type="NCBI Taxonomy" id="33414"/>
</organismHost>
<gene>
    <name type="primary">DA41</name>
    <name type="ORF">ORF17</name>
</gene>
<protein>
    <recommendedName>
        <fullName>Putative early 40.3 kDa protein</fullName>
    </recommendedName>
</protein>
<accession>O10278</accession>
<proteinExistence type="inferred from homology"/>
<keyword id="KW-0244">Early protein</keyword>
<keyword id="KW-1185">Reference proteome</keyword>